<comment type="function">
    <text evidence="1">This b-type cytochrome is tightly associated with the reaction center of photosystem II (PSII). PSII is a light-driven water:plastoquinone oxidoreductase that uses light energy to abstract electrons from H(2)O, generating O(2) and a proton gradient subsequently used for ATP formation. It consists of a core antenna complex that captures photons, and an electron transfer chain that converts photonic excitation into a charge separation.</text>
</comment>
<comment type="cofactor">
    <cofactor evidence="1">
        <name>heme b</name>
        <dbReference type="ChEBI" id="CHEBI:60344"/>
    </cofactor>
    <text evidence="1">With its partner (PsbE) binds heme. PSII binds additional chlorophylls, carotenoids and specific lipids.</text>
</comment>
<comment type="subunit">
    <text evidence="1">Heterodimer of an alpha subunit and a beta subunit. PSII is composed of 1 copy each of membrane proteins PsbA, PsbB, PsbC, PsbD, PsbE, PsbF, PsbH, PsbI, PsbJ, PsbK, PsbL, PsbM, PsbT, PsbX, PsbY, PsbZ, Psb30/Ycf12, at least 3 peripheral proteins of the oxygen-evolving complex and a large number of cofactors. It forms dimeric complexes.</text>
</comment>
<comment type="subcellular location">
    <subcellularLocation>
        <location evidence="1">Plastid</location>
        <location evidence="1">Chloroplast thylakoid membrane</location>
        <topology evidence="1">Single-pass membrane protein</topology>
    </subcellularLocation>
</comment>
<comment type="similarity">
    <text evidence="1">Belongs to the PsbE/PsbF family.</text>
</comment>
<accession>P62095</accession>
<accession>P05172</accession>
<accession>Q8HS05</accession>
<reference key="1">
    <citation type="journal article" date="1999" name="DNA Res.">
        <title>Complete structure of the chloroplast genome of Arabidopsis thaliana.</title>
        <authorList>
            <person name="Sato S."/>
            <person name="Nakamura Y."/>
            <person name="Kaneko T."/>
            <person name="Asamizu E."/>
            <person name="Tabata S."/>
        </authorList>
    </citation>
    <scope>NUCLEOTIDE SEQUENCE [LARGE SCALE GENOMIC DNA]</scope>
    <source>
        <strain>cv. Columbia</strain>
    </source>
</reference>
<reference key="2">
    <citation type="submission" date="2000-02" db="EMBL/GenBank/DDBJ databases">
        <title>Long branches in the seed plants and the root of the angiosperms.</title>
        <authorList>
            <person name="Graham S.W."/>
            <person name="Reeves P.A."/>
            <person name="Burns A."/>
            <person name="Olmstead R.G."/>
        </authorList>
    </citation>
    <scope>NUCLEOTIDE SEQUENCE [GENOMIC DNA]</scope>
</reference>
<proteinExistence type="evidence at protein level"/>
<gene>
    <name evidence="1" type="primary">psbF</name>
    <name type="ordered locus">AtCg00570</name>
</gene>
<dbReference type="EMBL" id="AP000423">
    <property type="protein sequence ID" value="BAA84401.1"/>
    <property type="molecule type" value="Genomic_DNA"/>
</dbReference>
<dbReference type="EMBL" id="AY007473">
    <property type="protein sequence ID" value="AAG26975.1"/>
    <property type="molecule type" value="Genomic_DNA"/>
</dbReference>
<dbReference type="RefSeq" id="NP_051075.1">
    <property type="nucleotide sequence ID" value="NC_000932.1"/>
</dbReference>
<dbReference type="PDB" id="5MDX">
    <property type="method" value="EM"/>
    <property type="resolution" value="5.30 A"/>
    <property type="chains" value="F/f=1-39"/>
</dbReference>
<dbReference type="PDB" id="7OUI">
    <property type="method" value="EM"/>
    <property type="resolution" value="2.79 A"/>
    <property type="chains" value="F/f=1-39"/>
</dbReference>
<dbReference type="PDBsum" id="5MDX"/>
<dbReference type="PDBsum" id="7OUI"/>
<dbReference type="EMDB" id="EMD-13078"/>
<dbReference type="EMDB" id="EMD-3491"/>
<dbReference type="SMR" id="P62095"/>
<dbReference type="FunCoup" id="P62095">
    <property type="interactions" value="48"/>
</dbReference>
<dbReference type="IntAct" id="P62095">
    <property type="interactions" value="1"/>
</dbReference>
<dbReference type="STRING" id="3702.P62095"/>
<dbReference type="TCDB" id="3.E.2.2.3">
    <property type="family name" value="the photosynthetic reaction center (prc) family"/>
</dbReference>
<dbReference type="PaxDb" id="3702-ATCG00570.1"/>
<dbReference type="ProteomicsDB" id="226415"/>
<dbReference type="EnsemblPlants" id="ATCG00570.1">
    <property type="protein sequence ID" value="ATCG00570.1"/>
    <property type="gene ID" value="ATCG00570"/>
</dbReference>
<dbReference type="GeneID" id="844746"/>
<dbReference type="Gramene" id="ATCG00570.1">
    <property type="protein sequence ID" value="ATCG00570.1"/>
    <property type="gene ID" value="ATCG00570"/>
</dbReference>
<dbReference type="KEGG" id="ath:ArthCp038"/>
<dbReference type="Araport" id="ATCG00570"/>
<dbReference type="TAIR" id="ATCG00570">
    <property type="gene designation" value="PSBF"/>
</dbReference>
<dbReference type="eggNOG" id="ENOG502SEUE">
    <property type="taxonomic scope" value="Eukaryota"/>
</dbReference>
<dbReference type="HOGENOM" id="CLU_211753_1_0_1"/>
<dbReference type="InParanoid" id="P62095"/>
<dbReference type="PRO" id="PR:P62095"/>
<dbReference type="Proteomes" id="UP000006548">
    <property type="component" value="Chloroplast Pltd"/>
</dbReference>
<dbReference type="ExpressionAtlas" id="P62095">
    <property type="expression patterns" value="baseline and differential"/>
</dbReference>
<dbReference type="GO" id="GO:0009507">
    <property type="term" value="C:chloroplast"/>
    <property type="evidence" value="ECO:0007005"/>
    <property type="project" value="TAIR"/>
</dbReference>
<dbReference type="GO" id="GO:0009535">
    <property type="term" value="C:chloroplast thylakoid membrane"/>
    <property type="evidence" value="ECO:0007005"/>
    <property type="project" value="TAIR"/>
</dbReference>
<dbReference type="GO" id="GO:0009539">
    <property type="term" value="C:photosystem II reaction center"/>
    <property type="evidence" value="ECO:0007669"/>
    <property type="project" value="InterPro"/>
</dbReference>
<dbReference type="GO" id="GO:0009536">
    <property type="term" value="C:plastid"/>
    <property type="evidence" value="ECO:0007005"/>
    <property type="project" value="TAIR"/>
</dbReference>
<dbReference type="GO" id="GO:0009055">
    <property type="term" value="F:electron transfer activity"/>
    <property type="evidence" value="ECO:0007669"/>
    <property type="project" value="UniProtKB-UniRule"/>
</dbReference>
<dbReference type="GO" id="GO:0020037">
    <property type="term" value="F:heme binding"/>
    <property type="evidence" value="ECO:0007669"/>
    <property type="project" value="InterPro"/>
</dbReference>
<dbReference type="GO" id="GO:0005506">
    <property type="term" value="F:iron ion binding"/>
    <property type="evidence" value="ECO:0007669"/>
    <property type="project" value="UniProtKB-UniRule"/>
</dbReference>
<dbReference type="GO" id="GO:0009767">
    <property type="term" value="P:photosynthetic electron transport chain"/>
    <property type="evidence" value="ECO:0007669"/>
    <property type="project" value="InterPro"/>
</dbReference>
<dbReference type="HAMAP" id="MF_00643">
    <property type="entry name" value="PSII_PsbF"/>
    <property type="match status" value="1"/>
</dbReference>
<dbReference type="InterPro" id="IPR006241">
    <property type="entry name" value="PSII_cyt_b559_bsu"/>
</dbReference>
<dbReference type="InterPro" id="IPR006216">
    <property type="entry name" value="PSII_cyt_b559_CS"/>
</dbReference>
<dbReference type="InterPro" id="IPR013081">
    <property type="entry name" value="PSII_cyt_b559_N"/>
</dbReference>
<dbReference type="NCBIfam" id="TIGR01333">
    <property type="entry name" value="cyt_b559_beta"/>
    <property type="match status" value="1"/>
</dbReference>
<dbReference type="Pfam" id="PF00283">
    <property type="entry name" value="Cytochrom_B559"/>
    <property type="match status" value="1"/>
</dbReference>
<dbReference type="PIRSF" id="PIRSF000037">
    <property type="entry name" value="PsbF"/>
    <property type="match status" value="1"/>
</dbReference>
<dbReference type="SUPFAM" id="SSF161045">
    <property type="entry name" value="Cytochrome b559 subunits"/>
    <property type="match status" value="1"/>
</dbReference>
<dbReference type="PROSITE" id="PS00537">
    <property type="entry name" value="CYTOCHROME_B559"/>
    <property type="match status" value="1"/>
</dbReference>
<name>PSBF_ARATH</name>
<geneLocation type="chloroplast"/>
<protein>
    <recommendedName>
        <fullName evidence="1">Cytochrome b559 subunit beta</fullName>
    </recommendedName>
    <alternativeName>
        <fullName evidence="1">PSII reaction center subunit VI</fullName>
    </alternativeName>
</protein>
<evidence type="ECO:0000255" key="1">
    <source>
        <dbReference type="HAMAP-Rule" id="MF_00643"/>
    </source>
</evidence>
<evidence type="ECO:0007829" key="2">
    <source>
        <dbReference type="PDB" id="7OUI"/>
    </source>
</evidence>
<organism>
    <name type="scientific">Arabidopsis thaliana</name>
    <name type="common">Mouse-ear cress</name>
    <dbReference type="NCBI Taxonomy" id="3702"/>
    <lineage>
        <taxon>Eukaryota</taxon>
        <taxon>Viridiplantae</taxon>
        <taxon>Streptophyta</taxon>
        <taxon>Embryophyta</taxon>
        <taxon>Tracheophyta</taxon>
        <taxon>Spermatophyta</taxon>
        <taxon>Magnoliopsida</taxon>
        <taxon>eudicotyledons</taxon>
        <taxon>Gunneridae</taxon>
        <taxon>Pentapetalae</taxon>
        <taxon>rosids</taxon>
        <taxon>malvids</taxon>
        <taxon>Brassicales</taxon>
        <taxon>Brassicaceae</taxon>
        <taxon>Camelineae</taxon>
        <taxon>Arabidopsis</taxon>
    </lineage>
</organism>
<sequence length="39" mass="4424">MTIDRTYPIFTVRWLAVHGLAVPTVSFLGSISAMQFIQR</sequence>
<feature type="chain" id="PRO_0000200355" description="Cytochrome b559 subunit beta">
    <location>
        <begin position="1"/>
        <end position="39"/>
    </location>
</feature>
<feature type="transmembrane region" description="Helical" evidence="1">
    <location>
        <begin position="14"/>
        <end position="30"/>
    </location>
</feature>
<feature type="binding site" description="axial binding residue" evidence="1">
    <location>
        <position position="18"/>
    </location>
    <ligand>
        <name>heme</name>
        <dbReference type="ChEBI" id="CHEBI:30413"/>
        <note>ligand shared with alpha subunit</note>
    </ligand>
    <ligandPart>
        <name>Fe</name>
        <dbReference type="ChEBI" id="CHEBI:18248"/>
    </ligandPart>
</feature>
<feature type="helix" evidence="2">
    <location>
        <begin position="12"/>
        <end position="35"/>
    </location>
</feature>
<keyword id="KW-0002">3D-structure</keyword>
<keyword id="KW-0150">Chloroplast</keyword>
<keyword id="KW-0249">Electron transport</keyword>
<keyword id="KW-0349">Heme</keyword>
<keyword id="KW-0408">Iron</keyword>
<keyword id="KW-0472">Membrane</keyword>
<keyword id="KW-0479">Metal-binding</keyword>
<keyword id="KW-0602">Photosynthesis</keyword>
<keyword id="KW-0604">Photosystem II</keyword>
<keyword id="KW-0934">Plastid</keyword>
<keyword id="KW-1185">Reference proteome</keyword>
<keyword id="KW-0793">Thylakoid</keyword>
<keyword id="KW-0812">Transmembrane</keyword>
<keyword id="KW-1133">Transmembrane helix</keyword>
<keyword id="KW-0813">Transport</keyword>